<organism>
    <name type="scientific">Lymantria dispar multicapsid nuclear polyhedrosis virus</name>
    <name type="common">LdMNPV</name>
    <dbReference type="NCBI Taxonomy" id="10449"/>
    <lineage>
        <taxon>Viruses</taxon>
        <taxon>Viruses incertae sedis</taxon>
        <taxon>Naldaviricetes</taxon>
        <taxon>Lefavirales</taxon>
        <taxon>Baculoviridae</taxon>
        <taxon>Alphabaculovirus</taxon>
        <taxon>Alphabaculovirus lydisparis</taxon>
    </lineage>
</organism>
<keyword id="KW-0472">Membrane</keyword>
<keyword id="KW-0261">Viral envelope protein</keyword>
<keyword id="KW-0946">Virion</keyword>
<comment type="function">
    <text>Component of the polyhedra envelope.</text>
</comment>
<comment type="subcellular location">
    <subcellularLocation>
        <location evidence="2">Virion membrane</location>
    </subcellularLocation>
</comment>
<comment type="similarity">
    <text evidence="2">Belongs to the baculoviridae E66 family.</text>
</comment>
<protein>
    <recommendedName>
        <fullName>Occlusion-derived virus envelope protein E66</fullName>
        <shortName>ODV-E66</shortName>
    </recommendedName>
</protein>
<proteinExistence type="inferred from homology"/>
<dbReference type="EMBL" id="D37947">
    <property type="protein sequence ID" value="BAA07161.1"/>
    <property type="molecule type" value="Genomic_DNA"/>
</dbReference>
<dbReference type="SMR" id="Q90115"/>
<dbReference type="GO" id="GO:0016020">
    <property type="term" value="C:membrane"/>
    <property type="evidence" value="ECO:0007669"/>
    <property type="project" value="UniProtKB-KW"/>
</dbReference>
<dbReference type="GO" id="GO:0019031">
    <property type="term" value="C:viral envelope"/>
    <property type="evidence" value="ECO:0007669"/>
    <property type="project" value="UniProtKB-KW"/>
</dbReference>
<dbReference type="GO" id="GO:0055036">
    <property type="term" value="C:virion membrane"/>
    <property type="evidence" value="ECO:0007669"/>
    <property type="project" value="UniProtKB-SubCell"/>
</dbReference>
<dbReference type="Gene3D" id="2.70.98.100">
    <property type="entry name" value="Baculovirus E66 occlusion-derived virus envelope protein, domain 2"/>
    <property type="match status" value="1"/>
</dbReference>
<dbReference type="Gene3D" id="1.50.10.100">
    <property type="entry name" value="Chondroitin AC/alginate lyase"/>
    <property type="match status" value="1"/>
</dbReference>
<dbReference type="InterPro" id="IPR043082">
    <property type="entry name" value="Baculo_ODV-E66_core"/>
</dbReference>
<dbReference type="InterPro" id="IPR008929">
    <property type="entry name" value="Chondroitin_lyas"/>
</dbReference>
<dbReference type="InterPro" id="IPR006934">
    <property type="entry name" value="ODV-E66_C_baculovirus"/>
</dbReference>
<dbReference type="Pfam" id="PF04850">
    <property type="entry name" value="Baculo_E66"/>
    <property type="match status" value="1"/>
</dbReference>
<dbReference type="SUPFAM" id="SSF48230">
    <property type="entry name" value="Chondroitin AC/alginate lyase"/>
    <property type="match status" value="1"/>
</dbReference>
<name>OE66_NPVLD</name>
<sequence length="664" mass="73071">GSFASVSQRAEPTAASAAAIAELANLDLDDFERYYTLTLLEKFNQKAEKIANPTRQFSQDGNVFAGLSPWSSPVDFGTCMHTLIGYGVRFRTPADALYLNDELAFNLYAAIVELYYNLPFPAPVNQAPWGAQADWYHFSITMPECVQNTCIALRGFYDLSDIARAIIDAYLPAPTFSLGWQRTAGNAMRMCLPYCYGQLLHGLSAAEIGAQPEVRYVLGLIAFPRVATGNGIHMDFAYFDHTDVRATAYLINSYFTFSYYNFLFGSHVVNMDNLYRCISLVGSARGTAHPALLSRNGSQFSNVLGHFIAYADGVVSADFSKILTIRTPRYFGSVVGQAPNVAYYEADPTNNTHAALWAMTRKIWPADGAVFNYRAQTVGFESGVILASNLNEPVVVPTTTTSTSSFLPSLAHTAAATTQSAGAMCMRVRLEELNLEFYSYTLYHAGGMFHLYDNVKALAPVSFNPRCVVLVHDTVQNSSVPAWSVASNLKTYNGTTAKHHNITNASSLANFSIRTLPAVGVQTLEQIMSADAVNAGLGVSCFSLLVASEAATDTTSVIKMDVNTFRDLDAKQRDSAGGELSHRRAQRRQLSPTDDQRRHQPLGRPPHSILRQDPFGPLLPFAHRAQSQVGLHYARRRRVRLRQLRVQSVSIQLLMMMTTQGCGR</sequence>
<organismHost>
    <name type="scientific">Lepidoptera</name>
    <name type="common">butterflies and moths</name>
    <dbReference type="NCBI Taxonomy" id="7088"/>
</organismHost>
<accession>Q90115</accession>
<feature type="chain" id="PRO_0000132931" description="Occlusion-derived virus envelope protein E66">
    <location>
        <begin position="1" status="less than"/>
        <end position="664"/>
    </location>
</feature>
<feature type="region of interest" description="Disordered" evidence="1">
    <location>
        <begin position="573"/>
        <end position="611"/>
    </location>
</feature>
<feature type="compositionally biased region" description="Basic and acidic residues" evidence="1">
    <location>
        <begin position="573"/>
        <end position="582"/>
    </location>
</feature>
<feature type="non-terminal residue">
    <location>
        <position position="1"/>
    </location>
</feature>
<evidence type="ECO:0000256" key="1">
    <source>
        <dbReference type="SAM" id="MobiDB-lite"/>
    </source>
</evidence>
<evidence type="ECO:0000305" key="2"/>
<reference key="1">
    <citation type="journal article" date="1992" name="J. Gen. Virol.">
        <title>Nucleotide sequence of the polyhedron envelope protein gene region of the Lymantria dispar nuclear polyhedrosis virus.</title>
        <authorList>
            <person name="Bjoernson R.M."/>
            <person name="Rohrmann G.F."/>
        </authorList>
    </citation>
    <scope>NUCLEOTIDE SEQUENCE [GENOMIC DNA]</scope>
</reference>